<reference evidence="5 6" key="1">
    <citation type="journal article" date="2017" name="PeerJ">
        <title>Biochemical and structural characterization of a novel arginine kinase from the spider Polybetes pythagoricus.</title>
        <authorList>
            <person name="Laino A."/>
            <person name="Lopez-Zavala A.A."/>
            <person name="Garcia-Orozco K.D."/>
            <person name="Carrasco-Miranda J.S."/>
            <person name="Santana M."/>
            <person name="Stojanoff V."/>
            <person name="Sotelo-Mundo R.R."/>
            <person name="Garcia C.F."/>
        </authorList>
    </citation>
    <scope>NUCLEOTIDE SEQUENCE [MRNA]</scope>
    <scope>X-RAY CRYSTALLOGRAPHY (2.00 ANGSTROMS) IN APO FORM AND IN COMPLEX WITH ARGININE</scope>
    <scope>FUNCTION</scope>
    <scope>CATALYTIC ACTIVITY</scope>
    <scope>BIOPHYSICOCHEMICAL PROPERTIES</scope>
</reference>
<evidence type="ECO:0000255" key="1">
    <source>
        <dbReference type="PROSITE-ProRule" id="PRU00842"/>
    </source>
</evidence>
<evidence type="ECO:0000255" key="2">
    <source>
        <dbReference type="PROSITE-ProRule" id="PRU00843"/>
    </source>
</evidence>
<evidence type="ECO:0000269" key="3">
    <source>
    </source>
</evidence>
<evidence type="ECO:0000303" key="4">
    <source>
    </source>
</evidence>
<evidence type="ECO:0007744" key="5">
    <source>
        <dbReference type="PDB" id="5U8E"/>
    </source>
</evidence>
<evidence type="ECO:0007744" key="6">
    <source>
        <dbReference type="PDB" id="5U92"/>
    </source>
</evidence>
<evidence type="ECO:0007829" key="7">
    <source>
        <dbReference type="PDB" id="5U92"/>
    </source>
</evidence>
<comment type="function">
    <text evidence="3">Catalyzes the reversible transfer of high energy ATP gamma-phosphate group to L-arginine.</text>
</comment>
<comment type="catalytic activity">
    <reaction evidence="3">
        <text>L-arginine + ATP = N(omega)-phospho-L-arginine + ADP + H(+)</text>
        <dbReference type="Rhea" id="RHEA:22940"/>
        <dbReference type="ChEBI" id="CHEBI:15378"/>
        <dbReference type="ChEBI" id="CHEBI:30616"/>
        <dbReference type="ChEBI" id="CHEBI:32682"/>
        <dbReference type="ChEBI" id="CHEBI:58477"/>
        <dbReference type="ChEBI" id="CHEBI:456216"/>
        <dbReference type="EC" id="2.7.3.3"/>
    </reaction>
</comment>
<comment type="biophysicochemical properties">
    <kinetics>
        <KM evidence="3">1.7 mM for L-arginine</KM>
        <text evidence="3">kcat is 75 sec(-1) for L-arginine.</text>
    </kinetics>
</comment>
<comment type="similarity">
    <text evidence="1 2">Belongs to the ATP:guanido phosphotransferase family.</text>
</comment>
<name>KARG_POLPT</name>
<dbReference type="EC" id="2.7.3.3" evidence="3"/>
<dbReference type="EMBL" id="MF001441">
    <property type="protein sequence ID" value="ASV64865.1"/>
    <property type="molecule type" value="mRNA"/>
</dbReference>
<dbReference type="PDB" id="5U8E">
    <property type="method" value="X-ray"/>
    <property type="resolution" value="2.18 A"/>
    <property type="chains" value="A=1-357"/>
</dbReference>
<dbReference type="PDB" id="5U92">
    <property type="method" value="X-ray"/>
    <property type="resolution" value="2.00 A"/>
    <property type="chains" value="A=1-357"/>
</dbReference>
<dbReference type="PDBsum" id="5U8E"/>
<dbReference type="PDBsum" id="5U92"/>
<dbReference type="SMR" id="A0A286R7K5"/>
<dbReference type="BRENDA" id="2.7.3.3">
    <property type="organism ID" value="17871"/>
</dbReference>
<dbReference type="GO" id="GO:0005615">
    <property type="term" value="C:extracellular space"/>
    <property type="evidence" value="ECO:0007669"/>
    <property type="project" value="TreeGrafter"/>
</dbReference>
<dbReference type="GO" id="GO:0004054">
    <property type="term" value="F:arginine kinase activity"/>
    <property type="evidence" value="ECO:0000314"/>
    <property type="project" value="UniProtKB"/>
</dbReference>
<dbReference type="GO" id="GO:0005524">
    <property type="term" value="F:ATP binding"/>
    <property type="evidence" value="ECO:0000314"/>
    <property type="project" value="UniProtKB"/>
</dbReference>
<dbReference type="GO" id="GO:0004111">
    <property type="term" value="F:creatine kinase activity"/>
    <property type="evidence" value="ECO:0007669"/>
    <property type="project" value="InterPro"/>
</dbReference>
<dbReference type="GO" id="GO:0046314">
    <property type="term" value="P:phosphocreatine biosynthetic process"/>
    <property type="evidence" value="ECO:0007669"/>
    <property type="project" value="InterPro"/>
</dbReference>
<dbReference type="GO" id="GO:0016310">
    <property type="term" value="P:phosphorylation"/>
    <property type="evidence" value="ECO:0000314"/>
    <property type="project" value="UniProtKB"/>
</dbReference>
<dbReference type="CDD" id="cd07932">
    <property type="entry name" value="arginine_kinase_like"/>
    <property type="match status" value="1"/>
</dbReference>
<dbReference type="FunFam" id="3.30.590.10:FF:000006">
    <property type="entry name" value="Arginine kinase 1"/>
    <property type="match status" value="1"/>
</dbReference>
<dbReference type="FunFam" id="1.10.135.10:FF:000003">
    <property type="entry name" value="Three-domain arginine kinase"/>
    <property type="match status" value="1"/>
</dbReference>
<dbReference type="Gene3D" id="1.10.135.10">
    <property type="entry name" value="ATP:guanido phosphotransferase, N-terminal domain"/>
    <property type="match status" value="1"/>
</dbReference>
<dbReference type="Gene3D" id="3.30.590.10">
    <property type="entry name" value="Glutamine synthetase/guanido kinase, catalytic domain"/>
    <property type="match status" value="1"/>
</dbReference>
<dbReference type="InterPro" id="IPR000749">
    <property type="entry name" value="ATP-guanido_PTrfase"/>
</dbReference>
<dbReference type="InterPro" id="IPR022415">
    <property type="entry name" value="ATP-guanido_PTrfase_AS"/>
</dbReference>
<dbReference type="InterPro" id="IPR022414">
    <property type="entry name" value="ATP-guanido_PTrfase_cat"/>
</dbReference>
<dbReference type="InterPro" id="IPR022413">
    <property type="entry name" value="ATP-guanido_PTrfase_N"/>
</dbReference>
<dbReference type="InterPro" id="IPR036802">
    <property type="entry name" value="ATP-guanido_PTrfase_N_sf"/>
</dbReference>
<dbReference type="InterPro" id="IPR014746">
    <property type="entry name" value="Gln_synth/guanido_kin_cat_dom"/>
</dbReference>
<dbReference type="PANTHER" id="PTHR11547:SF38">
    <property type="entry name" value="ARGININE KINASE 1-RELATED"/>
    <property type="match status" value="1"/>
</dbReference>
<dbReference type="PANTHER" id="PTHR11547">
    <property type="entry name" value="ARGININE OR CREATINE KINASE"/>
    <property type="match status" value="1"/>
</dbReference>
<dbReference type="Pfam" id="PF00217">
    <property type="entry name" value="ATP-gua_Ptrans"/>
    <property type="match status" value="1"/>
</dbReference>
<dbReference type="Pfam" id="PF02807">
    <property type="entry name" value="ATP-gua_PtransN"/>
    <property type="match status" value="1"/>
</dbReference>
<dbReference type="SUPFAM" id="SSF55931">
    <property type="entry name" value="Glutamine synthetase/guanido kinase"/>
    <property type="match status" value="1"/>
</dbReference>
<dbReference type="SUPFAM" id="SSF48034">
    <property type="entry name" value="Guanido kinase N-terminal domain"/>
    <property type="match status" value="1"/>
</dbReference>
<dbReference type="PROSITE" id="PS00112">
    <property type="entry name" value="PHOSPHAGEN_KINASE"/>
    <property type="match status" value="1"/>
</dbReference>
<dbReference type="PROSITE" id="PS51510">
    <property type="entry name" value="PHOSPHAGEN_KINASE_C"/>
    <property type="match status" value="1"/>
</dbReference>
<dbReference type="PROSITE" id="PS51509">
    <property type="entry name" value="PHOSPHAGEN_KINASE_N"/>
    <property type="match status" value="1"/>
</dbReference>
<feature type="chain" id="PRO_0000451077" description="Arginine kinase">
    <location>
        <begin position="1"/>
        <end position="357"/>
    </location>
</feature>
<feature type="domain" description="Phosphagen kinase N-terminal" evidence="1">
    <location>
        <begin position="9"/>
        <end position="91"/>
    </location>
</feature>
<feature type="domain" description="Phosphagen kinase C-terminal" evidence="2">
    <location>
        <begin position="119"/>
        <end position="356"/>
    </location>
</feature>
<feature type="binding site" evidence="3 6">
    <location>
        <begin position="64"/>
        <end position="66"/>
    </location>
    <ligand>
        <name>L-arginine</name>
        <dbReference type="ChEBI" id="CHEBI:32682"/>
    </ligand>
</feature>
<feature type="binding site" evidence="2">
    <location>
        <begin position="122"/>
        <end position="126"/>
    </location>
    <ligand>
        <name>ATP</name>
        <dbReference type="ChEBI" id="CHEBI:30616"/>
    </ligand>
</feature>
<feature type="binding site" evidence="2">
    <location>
        <position position="185"/>
    </location>
    <ligand>
        <name>ATP</name>
        <dbReference type="ChEBI" id="CHEBI:30616"/>
    </ligand>
</feature>
<feature type="binding site" evidence="3 6">
    <location>
        <position position="225"/>
    </location>
    <ligand>
        <name>L-arginine</name>
        <dbReference type="ChEBI" id="CHEBI:32682"/>
    </ligand>
</feature>
<feature type="binding site" evidence="2">
    <location>
        <position position="229"/>
    </location>
    <ligand>
        <name>ATP</name>
        <dbReference type="ChEBI" id="CHEBI:30616"/>
    </ligand>
</feature>
<feature type="binding site" evidence="3 6">
    <location>
        <position position="271"/>
    </location>
    <ligand>
        <name>L-arginine</name>
        <dbReference type="ChEBI" id="CHEBI:32682"/>
    </ligand>
</feature>
<feature type="binding site" evidence="2">
    <location>
        <begin position="280"/>
        <end position="284"/>
    </location>
    <ligand>
        <name>ATP</name>
        <dbReference type="ChEBI" id="CHEBI:30616"/>
    </ligand>
</feature>
<feature type="binding site" evidence="2">
    <location>
        <begin position="309"/>
        <end position="314"/>
    </location>
    <ligand>
        <name>ATP</name>
        <dbReference type="ChEBI" id="CHEBI:30616"/>
    </ligand>
</feature>
<feature type="helix" evidence="7">
    <location>
        <begin position="4"/>
        <end position="19"/>
    </location>
</feature>
<feature type="helix" evidence="7">
    <location>
        <begin position="26"/>
        <end position="30"/>
    </location>
</feature>
<feature type="helix" evidence="7">
    <location>
        <begin position="33"/>
        <end position="39"/>
    </location>
</feature>
<feature type="helix" evidence="7">
    <location>
        <begin position="51"/>
        <end position="59"/>
    </location>
</feature>
<feature type="strand" evidence="7">
    <location>
        <begin position="70"/>
        <end position="72"/>
    </location>
</feature>
<feature type="helix" evidence="7">
    <location>
        <begin position="73"/>
        <end position="77"/>
    </location>
</feature>
<feature type="helix" evidence="7">
    <location>
        <begin position="79"/>
        <end position="89"/>
    </location>
</feature>
<feature type="helix" evidence="7">
    <location>
        <begin position="107"/>
        <end position="109"/>
    </location>
</feature>
<feature type="strand" evidence="7">
    <location>
        <begin position="117"/>
        <end position="129"/>
    </location>
</feature>
<feature type="helix" evidence="7">
    <location>
        <begin position="137"/>
        <end position="139"/>
    </location>
</feature>
<feature type="helix" evidence="7">
    <location>
        <begin position="142"/>
        <end position="158"/>
    </location>
</feature>
<feature type="helix" evidence="7">
    <location>
        <begin position="161"/>
        <end position="163"/>
    </location>
</feature>
<feature type="strand" evidence="7">
    <location>
        <begin position="165"/>
        <end position="170"/>
    </location>
</feature>
<feature type="helix" evidence="7">
    <location>
        <begin position="175"/>
        <end position="183"/>
    </location>
</feature>
<feature type="helix" evidence="7">
    <location>
        <begin position="193"/>
        <end position="197"/>
    </location>
</feature>
<feature type="turn" evidence="7">
    <location>
        <begin position="202"/>
        <end position="207"/>
    </location>
</feature>
<feature type="strand" evidence="7">
    <location>
        <begin position="209"/>
        <end position="213"/>
    </location>
</feature>
<feature type="strand" evidence="7">
    <location>
        <begin position="216"/>
        <end position="236"/>
    </location>
</feature>
<feature type="helix" evidence="7">
    <location>
        <begin position="239"/>
        <end position="256"/>
    </location>
</feature>
<feature type="turn" evidence="7">
    <location>
        <begin position="263"/>
        <end position="265"/>
    </location>
</feature>
<feature type="helix" evidence="7">
    <location>
        <begin position="272"/>
        <end position="274"/>
    </location>
</feature>
<feature type="strand" evidence="7">
    <location>
        <begin position="280"/>
        <end position="286"/>
    </location>
</feature>
<feature type="helix" evidence="7">
    <location>
        <begin position="288"/>
        <end position="291"/>
    </location>
</feature>
<feature type="helix" evidence="7">
    <location>
        <begin position="294"/>
        <end position="303"/>
    </location>
</feature>
<feature type="strand" evidence="7">
    <location>
        <begin position="306"/>
        <end position="309"/>
    </location>
</feature>
<feature type="strand" evidence="7">
    <location>
        <begin position="322"/>
        <end position="327"/>
    </location>
</feature>
<feature type="strand" evidence="7">
    <location>
        <begin position="331"/>
        <end position="333"/>
    </location>
</feature>
<feature type="helix" evidence="7">
    <location>
        <begin position="335"/>
        <end position="355"/>
    </location>
</feature>
<organism>
    <name type="scientific">Polybetes pythagoricus</name>
    <name type="common">South American huntsman spider</name>
    <name type="synonym">Ocypete pythagorica</name>
    <dbReference type="NCBI Taxonomy" id="881871"/>
    <lineage>
        <taxon>Eukaryota</taxon>
        <taxon>Metazoa</taxon>
        <taxon>Ecdysozoa</taxon>
        <taxon>Arthropoda</taxon>
        <taxon>Chelicerata</taxon>
        <taxon>Arachnida</taxon>
        <taxon>Araneae</taxon>
        <taxon>Araneomorphae</taxon>
        <taxon>Entelegynae</taxon>
        <taxon>Dionycha</taxon>
        <taxon>Sparassidae</taxon>
        <taxon>Polybetes</taxon>
    </lineage>
</organism>
<accession>A0A286R7K5</accession>
<proteinExistence type="evidence at protein level"/>
<protein>
    <recommendedName>
        <fullName evidence="4">Arginine kinase</fullName>
        <shortName evidence="4">AK</shortName>
        <ecNumber evidence="3">2.7.3.3</ecNumber>
    </recommendedName>
</protein>
<keyword id="KW-0002">3D-structure</keyword>
<keyword id="KW-0067">ATP-binding</keyword>
<keyword id="KW-0418">Kinase</keyword>
<keyword id="KW-0547">Nucleotide-binding</keyword>
<keyword id="KW-0808">Transferase</keyword>
<sequence>MVDQATLDKLEAGFKKLQDATDCKSLLKKYLNREVFDQCKSLKTALGATLLDCIQSGVENLDSGVGIYAPDAEAYTLFAPIFNPIIEDYHEGFKPTDKHPPTDFGDINTIVNVDPSGKYVVSTHVRCGRSLKGYPFNPCLTEANYKEMEDKVSAIFGTFEGELKGKYYPLTGMDKATQQQLIDDHFLFKEGDRFLQAANACRYWPTGRGIYHNDAKTFLVWVNEEDHLRIISMQKGGDLKTIFQRLVNAVNTIESKLPFSRDDRLGFLTFCPTNLGTTIRASVHIALPKLAKDKKQLEAIAAKFNLQVRGTRGEHTESEGGVYDISNKRRMGLTEYQAVKEMQDGILEMIKMEEAAP</sequence>